<feature type="chain" id="PRO_0000203149" description="Protein MRG3-like">
    <location>
        <begin position="1"/>
        <end position="463"/>
    </location>
</feature>
<feature type="transmembrane region" description="Helical" evidence="1">
    <location>
        <begin position="54"/>
        <end position="74"/>
    </location>
</feature>
<feature type="repeat" description="TPR 1">
    <location>
        <begin position="84"/>
        <end position="118"/>
    </location>
</feature>
<feature type="repeat" description="TPR 2">
    <location>
        <begin position="128"/>
        <end position="161"/>
    </location>
</feature>
<feature type="repeat" description="TPR 3">
    <location>
        <begin position="358"/>
        <end position="389"/>
    </location>
</feature>
<feature type="repeat" description="TPR 4">
    <location>
        <begin position="409"/>
        <end position="442"/>
    </location>
</feature>
<feature type="sequence conflict" description="In Ref. 1; CAA81974." evidence="2" ref="1">
    <original>Y</original>
    <variation>I</variation>
    <location>
        <position position="252"/>
    </location>
</feature>
<dbReference type="EMBL" id="Z28133">
    <property type="protein sequence ID" value="CAA81974.1"/>
    <property type="molecule type" value="Genomic_DNA"/>
</dbReference>
<dbReference type="EMBL" id="BK006944">
    <property type="protein sequence ID" value="DAA09029.2"/>
    <property type="molecule type" value="Genomic_DNA"/>
</dbReference>
<dbReference type="PIR" id="S37962">
    <property type="entry name" value="S37962"/>
</dbReference>
<dbReference type="BioGRID" id="34003">
    <property type="interactions" value="34"/>
</dbReference>
<dbReference type="DIP" id="DIP-2642N"/>
<dbReference type="FunCoup" id="P36066">
    <property type="interactions" value="5"/>
</dbReference>
<dbReference type="IntAct" id="P36066">
    <property type="interactions" value="1"/>
</dbReference>
<dbReference type="MINT" id="P36066"/>
<dbReference type="STRING" id="4932.YKL133C"/>
<dbReference type="iPTMnet" id="P36066"/>
<dbReference type="PaxDb" id="4932-YKL133C"/>
<dbReference type="PeptideAtlas" id="P36066"/>
<dbReference type="EnsemblFungi" id="YKL133C_mRNA">
    <property type="protein sequence ID" value="YKL133C"/>
    <property type="gene ID" value="YKL133C"/>
</dbReference>
<dbReference type="KEGG" id="sce:YKL133C"/>
<dbReference type="AGR" id="SGD:S000001616"/>
<dbReference type="SGD" id="S000001616">
    <property type="gene designation" value="YKL133C"/>
</dbReference>
<dbReference type="VEuPathDB" id="FungiDB:YKL133C"/>
<dbReference type="eggNOG" id="ENOG502QU02">
    <property type="taxonomic scope" value="Eukaryota"/>
</dbReference>
<dbReference type="GeneTree" id="ENSGT00940000176771"/>
<dbReference type="HOGENOM" id="CLU_039436_0_0_1"/>
<dbReference type="InParanoid" id="P36066"/>
<dbReference type="OMA" id="VAMESEM"/>
<dbReference type="OrthoDB" id="10050400at2759"/>
<dbReference type="BioCyc" id="YEAST:G3O-31912-MONOMER"/>
<dbReference type="BioGRID-ORCS" id="853725">
    <property type="hits" value="0 hits in 10 CRISPR screens"/>
</dbReference>
<dbReference type="PRO" id="PR:P36066"/>
<dbReference type="Proteomes" id="UP000002311">
    <property type="component" value="Chromosome XI"/>
</dbReference>
<dbReference type="RNAct" id="P36066">
    <property type="molecule type" value="protein"/>
</dbReference>
<dbReference type="GO" id="GO:0031942">
    <property type="term" value="C:i-AAA complex"/>
    <property type="evidence" value="ECO:0000318"/>
    <property type="project" value="GO_Central"/>
</dbReference>
<dbReference type="GO" id="GO:0005739">
    <property type="term" value="C:mitochondrion"/>
    <property type="evidence" value="ECO:0007005"/>
    <property type="project" value="SGD"/>
</dbReference>
<dbReference type="GO" id="GO:0051787">
    <property type="term" value="F:misfolded protein binding"/>
    <property type="evidence" value="ECO:0000318"/>
    <property type="project" value="GO_Central"/>
</dbReference>
<dbReference type="GO" id="GO:0006515">
    <property type="term" value="P:protein quality control for misfolded or incompletely synthesized proteins"/>
    <property type="evidence" value="ECO:0000318"/>
    <property type="project" value="GO_Central"/>
</dbReference>
<dbReference type="CDD" id="cd24145">
    <property type="entry name" value="Mgr3-like"/>
    <property type="match status" value="1"/>
</dbReference>
<dbReference type="InterPro" id="IPR040201">
    <property type="entry name" value="Mrg3-like"/>
</dbReference>
<dbReference type="PANTHER" id="PTHR28142">
    <property type="entry name" value="MITOCHONDRIAL INNER MEMBRANE I-AAA PROTEASE SUPERCOMPLEX SUBUNIT MGR3-RELATED"/>
    <property type="match status" value="1"/>
</dbReference>
<dbReference type="PANTHER" id="PTHR28142:SF1">
    <property type="entry name" value="MITOCHONDRIAL INNER MEMBRANE I-AAA PROTEASE SUPERCOMPLEX SUBUNIT MGR3-RELATED"/>
    <property type="match status" value="1"/>
</dbReference>
<protein>
    <recommendedName>
        <fullName>Protein MRG3-like</fullName>
    </recommendedName>
</protein>
<accession>P36066</accession>
<accession>D6VX63</accession>
<sequence length="463" mass="54488">MWKYLHRSVKNEGTVERLTNLNLFTNHRFKFYSTLKEQSFWRIPFKRRSKLQKWVLSTGIVSFIAFNIWWVYWPHHTFPKPVAKILRKGLHSEIKKEGANYQKSLEYYLEALEECKAENVDLLSDEYTGIEIKIGEMYEKLHMYNDATALYGDMLKKFYNELSKTTDKSTKRKFFLLKRDLQILVRFNEINKDSETNATLLIMHLLLAQREFLENSPEFKNVLSKSELLNNQQLDWKNFKGLPFIGKSKPDYQMHLNSKRKQELKIKEPESEQCVFMKELLTARDLYTRYCLNRSNLSGALNSKITTLEWMLLADSPLDDILLAQAELGSIFYLNSEKFEGSLYAIDNEPYKKSEPLELIRSRLQENQNSCLQYSADCYKSIISFANENQYPKVAMESEMDQRILKALSLAHYGIGVINLHKGRLRASKKELKKAIRISEMIRFNELIEEAQRELKKVDGTPI</sequence>
<keyword id="KW-0472">Membrane</keyword>
<keyword id="KW-1185">Reference proteome</keyword>
<keyword id="KW-0677">Repeat</keyword>
<keyword id="KW-0802">TPR repeat</keyword>
<keyword id="KW-0812">Transmembrane</keyword>
<keyword id="KW-1133">Transmembrane helix</keyword>
<organism>
    <name type="scientific">Saccharomyces cerevisiae (strain ATCC 204508 / S288c)</name>
    <name type="common">Baker's yeast</name>
    <dbReference type="NCBI Taxonomy" id="559292"/>
    <lineage>
        <taxon>Eukaryota</taxon>
        <taxon>Fungi</taxon>
        <taxon>Dikarya</taxon>
        <taxon>Ascomycota</taxon>
        <taxon>Saccharomycotina</taxon>
        <taxon>Saccharomycetes</taxon>
        <taxon>Saccharomycetales</taxon>
        <taxon>Saccharomycetaceae</taxon>
        <taxon>Saccharomyces</taxon>
    </lineage>
</organism>
<name>MGR3L_YEAST</name>
<comment type="subcellular location">
    <subcellularLocation>
        <location evidence="2">Membrane</location>
        <topology evidence="2">Single-pass membrane protein</topology>
    </subcellularLocation>
</comment>
<comment type="similarity">
    <text evidence="2">Belongs to the MGR3 family.</text>
</comment>
<proteinExistence type="inferred from homology"/>
<evidence type="ECO:0000255" key="1"/>
<evidence type="ECO:0000305" key="2"/>
<gene>
    <name type="ordered locus">YKL133C</name>
</gene>
<reference key="1">
    <citation type="journal article" date="1994" name="Nature">
        <title>Complete DNA sequence of yeast chromosome XI.</title>
        <authorList>
            <person name="Dujon B."/>
            <person name="Alexandraki D."/>
            <person name="Andre B."/>
            <person name="Ansorge W."/>
            <person name="Baladron V."/>
            <person name="Ballesta J.P.G."/>
            <person name="Banrevi A."/>
            <person name="Bolle P.-A."/>
            <person name="Bolotin-Fukuhara M."/>
            <person name="Bossier P."/>
            <person name="Bou G."/>
            <person name="Boyer J."/>
            <person name="Buitrago M.J."/>
            <person name="Cheret G."/>
            <person name="Colleaux L."/>
            <person name="Daignan-Fornier B."/>
            <person name="del Rey F."/>
            <person name="Dion C."/>
            <person name="Domdey H."/>
            <person name="Duesterhoeft A."/>
            <person name="Duesterhus S."/>
            <person name="Entian K.-D."/>
            <person name="Erfle H."/>
            <person name="Esteban P.F."/>
            <person name="Feldmann H."/>
            <person name="Fernandes L."/>
            <person name="Fobo G.M."/>
            <person name="Fritz C."/>
            <person name="Fukuhara H."/>
            <person name="Gabel C."/>
            <person name="Gaillon L."/>
            <person name="Garcia-Cantalejo J.M."/>
            <person name="Garcia-Ramirez J.J."/>
            <person name="Gent M.E."/>
            <person name="Ghazvini M."/>
            <person name="Goffeau A."/>
            <person name="Gonzalez A."/>
            <person name="Grothues D."/>
            <person name="Guerreiro P."/>
            <person name="Hegemann J.H."/>
            <person name="Hewitt N."/>
            <person name="Hilger F."/>
            <person name="Hollenberg C.P."/>
            <person name="Horaitis O."/>
            <person name="Indge K.J."/>
            <person name="Jacquier A."/>
            <person name="James C.M."/>
            <person name="Jauniaux J.-C."/>
            <person name="Jimenez A."/>
            <person name="Keuchel H."/>
            <person name="Kirchrath L."/>
            <person name="Kleine K."/>
            <person name="Koetter P."/>
            <person name="Legrain P."/>
            <person name="Liebl S."/>
            <person name="Louis E.J."/>
            <person name="Maia e Silva A."/>
            <person name="Marck C."/>
            <person name="Monnier A.-L."/>
            <person name="Moestl D."/>
            <person name="Mueller S."/>
            <person name="Obermaier B."/>
            <person name="Oliver S.G."/>
            <person name="Pallier C."/>
            <person name="Pascolo S."/>
            <person name="Pfeiffer F."/>
            <person name="Philippsen P."/>
            <person name="Planta R.J."/>
            <person name="Pohl F.M."/>
            <person name="Pohl T.M."/>
            <person name="Poehlmann R."/>
            <person name="Portetelle D."/>
            <person name="Purnelle B."/>
            <person name="Puzos V."/>
            <person name="Ramezani Rad M."/>
            <person name="Rasmussen S.W."/>
            <person name="Remacha M.A."/>
            <person name="Revuelta J.L."/>
            <person name="Richard G.-F."/>
            <person name="Rieger M."/>
            <person name="Rodrigues-Pousada C."/>
            <person name="Rose M."/>
            <person name="Rupp T."/>
            <person name="Santos M.A."/>
            <person name="Schwager C."/>
            <person name="Sensen C."/>
            <person name="Skala J."/>
            <person name="Soares H."/>
            <person name="Sor F."/>
            <person name="Stegemann J."/>
            <person name="Tettelin H."/>
            <person name="Thierry A."/>
            <person name="Tzermia M."/>
            <person name="Urrestarazu L.A."/>
            <person name="van Dyck L."/>
            <person name="van Vliet-Reedijk J.C."/>
            <person name="Valens M."/>
            <person name="Vandenbol M."/>
            <person name="Vilela C."/>
            <person name="Vissers S."/>
            <person name="von Wettstein D."/>
            <person name="Voss H."/>
            <person name="Wiemann S."/>
            <person name="Xu G."/>
            <person name="Zimmermann J."/>
            <person name="Haasemann M."/>
            <person name="Becker I."/>
            <person name="Mewes H.-W."/>
        </authorList>
    </citation>
    <scope>NUCLEOTIDE SEQUENCE [LARGE SCALE GENOMIC DNA]</scope>
    <source>
        <strain>ATCC 204508 / S288c</strain>
    </source>
</reference>
<reference key="2">
    <citation type="journal article" date="2014" name="G3 (Bethesda)">
        <title>The reference genome sequence of Saccharomyces cerevisiae: Then and now.</title>
        <authorList>
            <person name="Engel S.R."/>
            <person name="Dietrich F.S."/>
            <person name="Fisk D.G."/>
            <person name="Binkley G."/>
            <person name="Balakrishnan R."/>
            <person name="Costanzo M.C."/>
            <person name="Dwight S.S."/>
            <person name="Hitz B.C."/>
            <person name="Karra K."/>
            <person name="Nash R.S."/>
            <person name="Weng S."/>
            <person name="Wong E.D."/>
            <person name="Lloyd P."/>
            <person name="Skrzypek M.S."/>
            <person name="Miyasato S.R."/>
            <person name="Simison M."/>
            <person name="Cherry J.M."/>
        </authorList>
    </citation>
    <scope>GENOME REANNOTATION</scope>
    <scope>SEQUENCE REVISION TO 252</scope>
    <source>
        <strain>ATCC 204508 / S288c</strain>
    </source>
</reference>